<protein>
    <recommendedName>
        <fullName>3-isopropylmalate dehydrogenase</fullName>
        <ecNumber>1.1.1.85</ecNumber>
    </recommendedName>
    <alternativeName>
        <fullName>3-IPM-DH</fullName>
    </alternativeName>
    <alternativeName>
        <fullName>Beta-IPM dehydrogenase</fullName>
        <shortName>IMDH</shortName>
    </alternativeName>
</protein>
<keyword id="KW-0028">Amino-acid biosynthesis</keyword>
<keyword id="KW-0100">Branched-chain amino acid biosynthesis</keyword>
<keyword id="KW-0963">Cytoplasm</keyword>
<keyword id="KW-0432">Leucine biosynthesis</keyword>
<keyword id="KW-0460">Magnesium</keyword>
<keyword id="KW-0464">Manganese</keyword>
<keyword id="KW-0479">Metal-binding</keyword>
<keyword id="KW-0520">NAD</keyword>
<keyword id="KW-0560">Oxidoreductase</keyword>
<keyword id="KW-1185">Reference proteome</keyword>
<organism>
    <name type="scientific">Lactococcus lactis subsp. lactis (strain IL1403)</name>
    <name type="common">Streptococcus lactis</name>
    <dbReference type="NCBI Taxonomy" id="272623"/>
    <lineage>
        <taxon>Bacteria</taxon>
        <taxon>Bacillati</taxon>
        <taxon>Bacillota</taxon>
        <taxon>Bacilli</taxon>
        <taxon>Lactobacillales</taxon>
        <taxon>Streptococcaceae</taxon>
        <taxon>Lactococcus</taxon>
    </lineage>
</organism>
<dbReference type="EC" id="1.1.1.85"/>
<dbReference type="EMBL" id="U92974">
    <property type="protein sequence ID" value="AAB81914.1"/>
    <property type="molecule type" value="Genomic_DNA"/>
</dbReference>
<dbReference type="EMBL" id="AE005176">
    <property type="protein sequence ID" value="AAK05316.1"/>
    <property type="status" value="ALT_SEQ"/>
    <property type="molecule type" value="Genomic_DNA"/>
</dbReference>
<dbReference type="PIR" id="B86777">
    <property type="entry name" value="B86777"/>
</dbReference>
<dbReference type="PIR" id="S35133">
    <property type="entry name" value="S35133"/>
</dbReference>
<dbReference type="RefSeq" id="NP_267374.1">
    <property type="nucleotide sequence ID" value="NC_002662.1"/>
</dbReference>
<dbReference type="SMR" id="Q02143"/>
<dbReference type="PaxDb" id="272623-L0074"/>
<dbReference type="EnsemblBacteria" id="AAK05316">
    <property type="protein sequence ID" value="AAK05316"/>
    <property type="gene ID" value="L0074"/>
</dbReference>
<dbReference type="KEGG" id="lla:L0074"/>
<dbReference type="PATRIC" id="fig|272623.7.peg.1317"/>
<dbReference type="eggNOG" id="COG0473">
    <property type="taxonomic scope" value="Bacteria"/>
</dbReference>
<dbReference type="HOGENOM" id="CLU_031953_0_3_9"/>
<dbReference type="OrthoDB" id="9806254at2"/>
<dbReference type="UniPathway" id="UPA00048">
    <property type="reaction ID" value="UER00072"/>
</dbReference>
<dbReference type="Proteomes" id="UP000002196">
    <property type="component" value="Chromosome"/>
</dbReference>
<dbReference type="GO" id="GO:0005829">
    <property type="term" value="C:cytosol"/>
    <property type="evidence" value="ECO:0007669"/>
    <property type="project" value="TreeGrafter"/>
</dbReference>
<dbReference type="GO" id="GO:0003862">
    <property type="term" value="F:3-isopropylmalate dehydrogenase activity"/>
    <property type="evidence" value="ECO:0007669"/>
    <property type="project" value="UniProtKB-UniRule"/>
</dbReference>
<dbReference type="GO" id="GO:0000287">
    <property type="term" value="F:magnesium ion binding"/>
    <property type="evidence" value="ECO:0007669"/>
    <property type="project" value="InterPro"/>
</dbReference>
<dbReference type="GO" id="GO:0051287">
    <property type="term" value="F:NAD binding"/>
    <property type="evidence" value="ECO:0007669"/>
    <property type="project" value="InterPro"/>
</dbReference>
<dbReference type="GO" id="GO:0009098">
    <property type="term" value="P:L-leucine biosynthetic process"/>
    <property type="evidence" value="ECO:0007669"/>
    <property type="project" value="UniProtKB-UniRule"/>
</dbReference>
<dbReference type="FunFam" id="3.40.718.10:FF:000006">
    <property type="entry name" value="3-isopropylmalate dehydrogenase"/>
    <property type="match status" value="1"/>
</dbReference>
<dbReference type="Gene3D" id="3.40.718.10">
    <property type="entry name" value="Isopropylmalate Dehydrogenase"/>
    <property type="match status" value="1"/>
</dbReference>
<dbReference type="HAMAP" id="MF_01033">
    <property type="entry name" value="LeuB_type1"/>
    <property type="match status" value="1"/>
</dbReference>
<dbReference type="InterPro" id="IPR019818">
    <property type="entry name" value="IsoCit/isopropylmalate_DH_CS"/>
</dbReference>
<dbReference type="InterPro" id="IPR024084">
    <property type="entry name" value="IsoPropMal-DH-like_dom"/>
</dbReference>
<dbReference type="InterPro" id="IPR004429">
    <property type="entry name" value="Isopropylmalate_DH"/>
</dbReference>
<dbReference type="NCBIfam" id="TIGR00169">
    <property type="entry name" value="leuB"/>
    <property type="match status" value="1"/>
</dbReference>
<dbReference type="PANTHER" id="PTHR42979">
    <property type="entry name" value="3-ISOPROPYLMALATE DEHYDROGENASE"/>
    <property type="match status" value="1"/>
</dbReference>
<dbReference type="PANTHER" id="PTHR42979:SF1">
    <property type="entry name" value="3-ISOPROPYLMALATE DEHYDROGENASE"/>
    <property type="match status" value="1"/>
</dbReference>
<dbReference type="Pfam" id="PF00180">
    <property type="entry name" value="Iso_dh"/>
    <property type="match status" value="1"/>
</dbReference>
<dbReference type="SMART" id="SM01329">
    <property type="entry name" value="Iso_dh"/>
    <property type="match status" value="1"/>
</dbReference>
<dbReference type="SUPFAM" id="SSF53659">
    <property type="entry name" value="Isocitrate/Isopropylmalate dehydrogenase-like"/>
    <property type="match status" value="1"/>
</dbReference>
<dbReference type="PROSITE" id="PS00470">
    <property type="entry name" value="IDH_IMDH"/>
    <property type="match status" value="1"/>
</dbReference>
<evidence type="ECO:0000250" key="1"/>
<evidence type="ECO:0000305" key="2"/>
<accession>Q02143</accession>
<accession>Q9CG87</accession>
<feature type="chain" id="PRO_0000083701" description="3-isopropylmalate dehydrogenase">
    <location>
        <begin position="1"/>
        <end position="345"/>
    </location>
</feature>
<feature type="binding site" evidence="1">
    <location>
        <position position="94"/>
    </location>
    <ligand>
        <name>substrate</name>
    </ligand>
</feature>
<feature type="binding site" evidence="1">
    <location>
        <position position="104"/>
    </location>
    <ligand>
        <name>substrate</name>
    </ligand>
</feature>
<feature type="binding site" evidence="1">
    <location>
        <position position="130"/>
    </location>
    <ligand>
        <name>substrate</name>
    </ligand>
</feature>
<feature type="binding site" evidence="1">
    <location>
        <position position="215"/>
    </location>
    <ligand>
        <name>Mg(2+)</name>
        <dbReference type="ChEBI" id="CHEBI:18420"/>
    </ligand>
</feature>
<feature type="binding site" evidence="1">
    <location>
        <position position="215"/>
    </location>
    <ligand>
        <name>substrate</name>
    </ligand>
</feature>
<feature type="binding site" evidence="1">
    <location>
        <position position="239"/>
    </location>
    <ligand>
        <name>Mg(2+)</name>
        <dbReference type="ChEBI" id="CHEBI:18420"/>
    </ligand>
</feature>
<feature type="binding site" evidence="1">
    <location>
        <position position="243"/>
    </location>
    <ligand>
        <name>Mg(2+)</name>
        <dbReference type="ChEBI" id="CHEBI:18420"/>
    </ligand>
</feature>
<feature type="binding site" evidence="1">
    <location>
        <begin position="273"/>
        <end position="285"/>
    </location>
    <ligand>
        <name>NAD(+)</name>
        <dbReference type="ChEBI" id="CHEBI:57540"/>
    </ligand>
</feature>
<feature type="site" description="Important for catalysis" evidence="1">
    <location>
        <position position="137"/>
    </location>
</feature>
<feature type="site" description="Important for catalysis" evidence="1">
    <location>
        <position position="183"/>
    </location>
</feature>
<feature type="sequence variant" description="In strain: IL1403.">
    <original>V</original>
    <variation>M</variation>
    <location>
        <position position="128"/>
    </location>
</feature>
<feature type="sequence variant" description="In strain: IL1403.">
    <original>A</original>
    <variation>T</variation>
    <location>
        <position position="308"/>
    </location>
</feature>
<feature type="sequence conflict" description="In Ref. 2." evidence="2" ref="2">
    <original>E</original>
    <variation>G</variation>
    <location>
        <position position="16"/>
    </location>
</feature>
<feature type="sequence conflict" description="In Ref. 2." evidence="2" ref="2">
    <original>A</original>
    <variation>R</variation>
    <location>
        <position position="66"/>
    </location>
</feature>
<name>LEU3_LACLA</name>
<comment type="function">
    <text>Catalyzes the oxidation of 3-carboxy-2-hydroxy-4-methylpentanoate (3-isopropylmalate) to 3-carboxy-4-methyl-2-oxopentanoate. The product decarboxylates to 4-methyl-2 oxopentanoate.</text>
</comment>
<comment type="catalytic activity">
    <reaction>
        <text>(2R,3S)-3-isopropylmalate + NAD(+) = 4-methyl-2-oxopentanoate + CO2 + NADH</text>
        <dbReference type="Rhea" id="RHEA:32271"/>
        <dbReference type="ChEBI" id="CHEBI:16526"/>
        <dbReference type="ChEBI" id="CHEBI:17865"/>
        <dbReference type="ChEBI" id="CHEBI:35121"/>
        <dbReference type="ChEBI" id="CHEBI:57540"/>
        <dbReference type="ChEBI" id="CHEBI:57945"/>
        <dbReference type="EC" id="1.1.1.85"/>
    </reaction>
</comment>
<comment type="cofactor">
    <cofactor evidence="1">
        <name>Mg(2+)</name>
        <dbReference type="ChEBI" id="CHEBI:18420"/>
    </cofactor>
    <cofactor evidence="1">
        <name>Mn(2+)</name>
        <dbReference type="ChEBI" id="CHEBI:29035"/>
    </cofactor>
    <text evidence="1">Binds 1 Mg(2+) or Mn(2+) ion per subunit.</text>
</comment>
<comment type="pathway">
    <text>Amino-acid biosynthesis; L-leucine biosynthesis; L-leucine from 3-methyl-2-oxobutanoate: step 3/4.</text>
</comment>
<comment type="subunit">
    <text evidence="1">Homodimer.</text>
</comment>
<comment type="subcellular location">
    <subcellularLocation>
        <location>Cytoplasm</location>
    </subcellularLocation>
</comment>
<comment type="similarity">
    <text evidence="2">Belongs to the isocitrate and isopropylmalate dehydrogenases family. LeuB type 1 subfamily.</text>
</comment>
<comment type="sequence caution" evidence="2">
    <conflict type="erroneous termination">
        <sequence resource="EMBL-CDS" id="AAK05316"/>
    </conflict>
    <text>Truncated C-terminus. The resulting protein is truncated and inactive in the dairy strain IL1403, where the leucine biosynthesis pathway is not functional.</text>
</comment>
<proteinExistence type="inferred from homology"/>
<reference key="1">
    <citation type="journal article" date="1992" name="J. Bacteriol.">
        <title>Branched-chain amino acid biosynthesis genes in Lactococcus lactis subsp. lactis.</title>
        <authorList>
            <person name="Godon J.-J."/>
            <person name="Chopin M.-C."/>
            <person name="Ehrlich S.D."/>
        </authorList>
    </citation>
    <scope>NUCLEOTIDE SEQUENCE [GENOMIC DNA]</scope>
    <source>
        <strain>NCDO 2118</strain>
    </source>
</reference>
<reference key="2">
    <citation type="journal article" date="1993" name="J. Bacteriol.">
        <title>Gene inactivation in Lactococcus lactis: branched-chain amino acid biosynthesis.</title>
        <authorList>
            <person name="Godon J.-J."/>
            <person name="Delorme C."/>
            <person name="Bardowski J."/>
            <person name="Chopin M.-C."/>
            <person name="Ehrlich S.D."/>
            <person name="Renault P."/>
        </authorList>
    </citation>
    <scope>NUCLEOTIDE SEQUENCE [GENOMIC DNA]</scope>
    <source>
        <strain>IL1403</strain>
    </source>
</reference>
<reference key="3">
    <citation type="journal article" date="2001" name="Genome Res.">
        <title>The complete genome sequence of the lactic acid bacterium Lactococcus lactis ssp. lactis IL1403.</title>
        <authorList>
            <person name="Bolotin A."/>
            <person name="Wincker P."/>
            <person name="Mauger S."/>
            <person name="Jaillon O."/>
            <person name="Malarme K."/>
            <person name="Weissenbach J."/>
            <person name="Ehrlich S.D."/>
            <person name="Sorokin A."/>
        </authorList>
    </citation>
    <scope>NUCLEOTIDE SEQUENCE [LARGE SCALE GENOMIC DNA]</scope>
    <source>
        <strain>IL1403</strain>
    </source>
</reference>
<sequence length="345" mass="37587">MSKKIVTLAGDGIGPEIMSAGLSVLKAVSKKIDFEYELEAKDFGGIAIDKHGHPLPEETLQAVKNADAILLAAIGHPKYNNAKVRPEQGLLALRKELGLYANVRPLKIYPALKKLSPIRNVENVDFLVIRELTGGIYFGQHELADDKARDVNDYSADEIRRILHFAFKSAQSRPRKLLTSVDKQNVLATSKLWRKMADEIADEYPDVRLEHQLVDSCAMLLITNPQQFDVIVTENLFGDILSDEASSLAGSLGVMPSSSHGFNGLALYEPIHGSAPDIAGKGIANPVSMILSIAMMLRESFGQEDGAAMIEKAVTQTFTDGILTKDLGGTATTKEMTEAILKNCQ</sequence>
<gene>
    <name type="primary">leuB</name>
    <name type="ordered locus">LL1218</name>
    <name type="ORF">L0074</name>
</gene>